<comment type="function">
    <text evidence="1">Catalyzes the first step of the methylation pathway of phosphatidylcholine biosynthesis, the SAM-dependent methylation of phosphatidylethanolamine (PE) to phosphatidylmonomethylethanolamine (PMME).</text>
</comment>
<comment type="catalytic activity">
    <reaction evidence="1">
        <text>a 1,2-diacyl-sn-glycero-3-phosphoethanolamine + S-adenosyl-L-methionine = a 1,2-diacyl-sn-glycero-3-phospho-N-methylethanolamine + S-adenosyl-L-homocysteine + H(+)</text>
        <dbReference type="Rhea" id="RHEA:11164"/>
        <dbReference type="ChEBI" id="CHEBI:15378"/>
        <dbReference type="ChEBI" id="CHEBI:57856"/>
        <dbReference type="ChEBI" id="CHEBI:59789"/>
        <dbReference type="ChEBI" id="CHEBI:64573"/>
        <dbReference type="ChEBI" id="CHEBI:64612"/>
        <dbReference type="EC" id="2.1.1.17"/>
    </reaction>
</comment>
<comment type="pathway">
    <text evidence="1">Phospholipid metabolism; phosphatidylcholine biosynthesis.</text>
</comment>
<comment type="subcellular location">
    <subcellularLocation>
        <location evidence="1">Endoplasmic reticulum membrane</location>
        <topology evidence="1">Multi-pass membrane protein</topology>
    </subcellularLocation>
</comment>
<comment type="similarity">
    <text evidence="1">Belongs to the class VI-like SAM-binding methyltransferase superfamily. CHO2 family.</text>
</comment>
<dbReference type="EC" id="2.1.1.17" evidence="1"/>
<dbReference type="EMBL" id="GG657448">
    <property type="protein sequence ID" value="OAT04249.1"/>
    <property type="molecule type" value="Genomic_DNA"/>
</dbReference>
<dbReference type="RefSeq" id="XP_002629599.1">
    <property type="nucleotide sequence ID" value="XM_002629553.1"/>
</dbReference>
<dbReference type="SMR" id="C5JCV0"/>
<dbReference type="STRING" id="559298.C5JCV0"/>
<dbReference type="GeneID" id="8508161"/>
<dbReference type="KEGG" id="bgh:BDBG_00845"/>
<dbReference type="VEuPathDB" id="FungiDB:BDBG_00845"/>
<dbReference type="HOGENOM" id="CLU_005987_0_0_1"/>
<dbReference type="OrthoDB" id="4583at2759"/>
<dbReference type="UniPathway" id="UPA00753"/>
<dbReference type="Proteomes" id="UP000002038">
    <property type="component" value="Unassembled WGS sequence"/>
</dbReference>
<dbReference type="GO" id="GO:0005789">
    <property type="term" value="C:endoplasmic reticulum membrane"/>
    <property type="evidence" value="ECO:0007669"/>
    <property type="project" value="UniProtKB-SubCell"/>
</dbReference>
<dbReference type="GO" id="GO:0004608">
    <property type="term" value="F:phosphatidylethanolamine N-methyltransferase activity"/>
    <property type="evidence" value="ECO:0007669"/>
    <property type="project" value="UniProtKB-UniRule"/>
</dbReference>
<dbReference type="GO" id="GO:0032259">
    <property type="term" value="P:methylation"/>
    <property type="evidence" value="ECO:0007669"/>
    <property type="project" value="UniProtKB-KW"/>
</dbReference>
<dbReference type="GO" id="GO:0006656">
    <property type="term" value="P:phosphatidylcholine biosynthetic process"/>
    <property type="evidence" value="ECO:0007669"/>
    <property type="project" value="UniProtKB-UniRule"/>
</dbReference>
<dbReference type="FunFam" id="2.60.40.2840:FF:000006">
    <property type="entry name" value="Phosphatidylethanolamine N-methyltransferase"/>
    <property type="match status" value="1"/>
</dbReference>
<dbReference type="Gene3D" id="2.60.40.2840">
    <property type="match status" value="1"/>
</dbReference>
<dbReference type="HAMAP" id="MF_03217">
    <property type="entry name" value="PEMT"/>
    <property type="match status" value="1"/>
</dbReference>
<dbReference type="InterPro" id="IPR007318">
    <property type="entry name" value="Phopholipid_MeTrfase"/>
</dbReference>
<dbReference type="InterPro" id="IPR016219">
    <property type="entry name" value="Phosphatid-EA_MeTrfase_fun"/>
</dbReference>
<dbReference type="PANTHER" id="PTHR32138">
    <property type="entry name" value="PHOSPHATIDYLETHANOLAMINE N-METHYLTRANSFERASE"/>
    <property type="match status" value="1"/>
</dbReference>
<dbReference type="PANTHER" id="PTHR32138:SF0">
    <property type="entry name" value="PHOSPHATIDYLETHANOLAMINE N-METHYLTRANSFERASE"/>
    <property type="match status" value="1"/>
</dbReference>
<dbReference type="Pfam" id="PF04191">
    <property type="entry name" value="PEMT"/>
    <property type="match status" value="2"/>
</dbReference>
<dbReference type="PIRSF" id="PIRSF000383">
    <property type="entry name" value="PEAMT"/>
    <property type="match status" value="1"/>
</dbReference>
<dbReference type="PROSITE" id="PS51598">
    <property type="entry name" value="SAM_CHO2"/>
    <property type="match status" value="1"/>
</dbReference>
<proteinExistence type="inferred from homology"/>
<reference key="1">
    <citation type="journal article" date="2015" name="PLoS Genet.">
        <title>The dynamic genome and transcriptome of the human fungal pathogen Blastomyces and close relative Emmonsia.</title>
        <authorList>
            <person name="Munoz J.F."/>
            <person name="Gauthier G.M."/>
            <person name="Desjardins C.A."/>
            <person name="Gallo J.E."/>
            <person name="Holder J."/>
            <person name="Sullivan T.D."/>
            <person name="Marty A.J."/>
            <person name="Carmen J.C."/>
            <person name="Chen Z."/>
            <person name="Ding L."/>
            <person name="Gujja S."/>
            <person name="Magrini V."/>
            <person name="Misas E."/>
            <person name="Mitreva M."/>
            <person name="Priest M."/>
            <person name="Saif S."/>
            <person name="Whiston E.A."/>
            <person name="Young S."/>
            <person name="Zeng Q."/>
            <person name="Goldman W.E."/>
            <person name="Mardis E.R."/>
            <person name="Taylor J.W."/>
            <person name="McEwen J.G."/>
            <person name="Clay O.K."/>
            <person name="Klein B.S."/>
            <person name="Cuomo C.A."/>
        </authorList>
    </citation>
    <scope>NUCLEOTIDE SEQUENCE [LARGE SCALE GENOMIC DNA]</scope>
    <source>
        <strain>SLH14081</strain>
    </source>
</reference>
<protein>
    <recommendedName>
        <fullName evidence="1">Phosphatidylethanolamine N-methyltransferase</fullName>
        <shortName evidence="1">PE methyltransferase</shortName>
        <shortName evidence="1">PEAMT</shortName>
        <shortName evidence="1">PEMT</shortName>
        <ecNumber evidence="1">2.1.1.17</ecNumber>
    </recommendedName>
</protein>
<organism>
    <name type="scientific">Blastomyces gilchristii (strain SLH14081)</name>
    <name type="common">Blastomyces dermatitidis</name>
    <dbReference type="NCBI Taxonomy" id="559298"/>
    <lineage>
        <taxon>Eukaryota</taxon>
        <taxon>Fungi</taxon>
        <taxon>Dikarya</taxon>
        <taxon>Ascomycota</taxon>
        <taxon>Pezizomycotina</taxon>
        <taxon>Eurotiomycetes</taxon>
        <taxon>Eurotiomycetidae</taxon>
        <taxon>Onygenales</taxon>
        <taxon>Ajellomycetaceae</taxon>
        <taxon>Blastomyces</taxon>
    </lineage>
</organism>
<sequence>MSEQATSSGLESRSNGLRERNLQASKSAADRDVASQSLEDKLQVEEGEADTEKKTFGRTPDGTVFTVPPTRDMVSQLLSPSEPKNISDIFVLAILGCHILLLWFLPSSFRVAAFAVIFLFWRASYNIGIGWLLHMQSNGRTLVCWAKKSNIFVNPSTGQNPHPTLYKLLKWELETKISEQYSFEEAPTEYNTWLVFRRVVDLILMCDFTSYCLFAIACGGRPTGESFIMLALRWITGMSLVLFNLWVKLDAHRVVKDFAWYWGDFFYLIDQDLTFDGVFEMAPHPMYSVGYAGYYGISLMAASYKILFISILAHAAQFAFLVLVENPHIEKTYNAPPPRKRVADTDTKPQEDENSHEGSVVSDTLSSAPVIPPLQPSSMHSLLGLHNIDLYRSTDQSVLLAQVLFFALTTLTPSTPVYQFCFVLNAALWRIWYSVGIGYILNRQSNCKMWTRHFVKYGESNHEAWRQWKGTYHLSMTMTYASFIAAAWKMYSFPQDWRYGLVLLRHILGASLIALQIWTSTSIYESLGEFGWFFGDFFFDEFPKLTYSGIYRFLNNPERVLGLAGVWGAVLITSTKSVVFLALLSHTLTLAFIQLVERPHMQKLYGQSLRRDAGLVRSLKRSLPPSLKQIHGSVDKILDDSFEFIEEFIEAARPKLAAGVQTFVKDTSALFQKYPARVTISRLEPDLAGYDLKDYSITLEGTQPSRPAQFERASDKEGERARSMPYRRGEQENLMFEYGAPIKVKWTAPLNHSKKDWVGLYMVTDNTSREVTRVSSQGRWIATNQASFDSETCEQGLISSDIVLKSSRDDGEPRDVASGEMVFSGDKLWWTQGVFEFRYHHNGKHNVMAVSRPFEICIGRFDEDDIEVDNYGLVRAAVEAALLPVVQNCFDRDPEIAPQTVEEHYGCLVDRDGKYSKRVVFAVHHMFGIEFAPEVVRADGNIRNLAWRICNAKKVLAPYSMSRSNGASTPTAAHEED</sequence>
<keyword id="KW-0256">Endoplasmic reticulum</keyword>
<keyword id="KW-0444">Lipid biosynthesis</keyword>
<keyword id="KW-0443">Lipid metabolism</keyword>
<keyword id="KW-0472">Membrane</keyword>
<keyword id="KW-0489">Methyltransferase</keyword>
<keyword id="KW-0594">Phospholipid biosynthesis</keyword>
<keyword id="KW-1208">Phospholipid metabolism</keyword>
<keyword id="KW-1185">Reference proteome</keyword>
<keyword id="KW-0949">S-adenosyl-L-methionine</keyword>
<keyword id="KW-0808">Transferase</keyword>
<keyword id="KW-0812">Transmembrane</keyword>
<keyword id="KW-1133">Transmembrane helix</keyword>
<gene>
    <name type="primary">CHO2</name>
    <name type="ORF">BDBG_00845</name>
</gene>
<evidence type="ECO:0000255" key="1">
    <source>
        <dbReference type="HAMAP-Rule" id="MF_03217"/>
    </source>
</evidence>
<evidence type="ECO:0000256" key="2">
    <source>
        <dbReference type="SAM" id="MobiDB-lite"/>
    </source>
</evidence>
<name>CHO2_BLAGS</name>
<feature type="chain" id="PRO_0000405870" description="Phosphatidylethanolamine N-methyltransferase">
    <location>
        <begin position="1"/>
        <end position="977"/>
    </location>
</feature>
<feature type="topological domain" description="Lumenal" evidence="1">
    <location>
        <begin position="1"/>
        <end position="88"/>
    </location>
</feature>
<feature type="transmembrane region" description="Helical" evidence="1">
    <location>
        <begin position="89"/>
        <end position="109"/>
    </location>
</feature>
<feature type="topological domain" description="Cytoplasmic" evidence="1">
    <location>
        <begin position="110"/>
        <end position="112"/>
    </location>
</feature>
<feature type="transmembrane region" description="Helical" evidence="1">
    <location>
        <begin position="113"/>
        <end position="133"/>
    </location>
</feature>
<feature type="topological domain" description="Lumenal" evidence="1">
    <location>
        <begin position="134"/>
        <end position="198"/>
    </location>
</feature>
<feature type="transmembrane region" description="Helical" evidence="1">
    <location>
        <begin position="199"/>
        <end position="219"/>
    </location>
</feature>
<feature type="topological domain" description="Cytoplasmic" evidence="1">
    <location>
        <begin position="220"/>
        <end position="226"/>
    </location>
</feature>
<feature type="transmembrane region" description="Helical" evidence="1">
    <location>
        <begin position="227"/>
        <end position="247"/>
    </location>
</feature>
<feature type="topological domain" description="Lumenal" evidence="1">
    <location>
        <begin position="248"/>
        <end position="280"/>
    </location>
</feature>
<feature type="transmembrane region" description="Helical" evidence="1">
    <location>
        <begin position="281"/>
        <end position="301"/>
    </location>
</feature>
<feature type="topological domain" description="Cytoplasmic" evidence="1">
    <location>
        <begin position="302"/>
        <end position="303"/>
    </location>
</feature>
<feature type="transmembrane region" description="Helical" evidence="1">
    <location>
        <begin position="304"/>
        <end position="324"/>
    </location>
</feature>
<feature type="topological domain" description="Lumenal" evidence="1">
    <location>
        <begin position="325"/>
        <end position="397"/>
    </location>
</feature>
<feature type="transmembrane region" description="Helical" evidence="1">
    <location>
        <begin position="398"/>
        <end position="418"/>
    </location>
</feature>
<feature type="topological domain" description="Cytoplasmic" evidence="1">
    <location>
        <position position="419"/>
    </location>
</feature>
<feature type="transmembrane region" description="Helical" evidence="1">
    <location>
        <begin position="420"/>
        <end position="440"/>
    </location>
</feature>
<feature type="topological domain" description="Lumenal" evidence="1">
    <location>
        <begin position="441"/>
        <end position="471"/>
    </location>
</feature>
<feature type="transmembrane region" description="Helical" evidence="1">
    <location>
        <begin position="472"/>
        <end position="488"/>
    </location>
</feature>
<feature type="topological domain" description="Cytoplasmic" evidence="1">
    <location>
        <begin position="489"/>
        <end position="498"/>
    </location>
</feature>
<feature type="transmembrane region" description="Helical" evidence="1">
    <location>
        <begin position="499"/>
        <end position="519"/>
    </location>
</feature>
<feature type="topological domain" description="Lumenal" evidence="1">
    <location>
        <begin position="520"/>
        <end position="562"/>
    </location>
</feature>
<feature type="transmembrane region" description="Helical" evidence="1">
    <location>
        <begin position="563"/>
        <end position="583"/>
    </location>
</feature>
<feature type="topological domain" description="Cytoplasmic" evidence="1">
    <location>
        <begin position="584"/>
        <end position="977"/>
    </location>
</feature>
<feature type="region of interest" description="Disordered" evidence="2">
    <location>
        <begin position="1"/>
        <end position="62"/>
    </location>
</feature>
<feature type="region of interest" description="Disordered" evidence="2">
    <location>
        <begin position="334"/>
        <end position="366"/>
    </location>
</feature>
<feature type="region of interest" description="Disordered" evidence="2">
    <location>
        <begin position="703"/>
        <end position="724"/>
    </location>
</feature>
<feature type="compositionally biased region" description="Polar residues" evidence="2">
    <location>
        <begin position="1"/>
        <end position="15"/>
    </location>
</feature>
<feature type="compositionally biased region" description="Basic and acidic residues" evidence="2">
    <location>
        <begin position="28"/>
        <end position="55"/>
    </location>
</feature>
<feature type="compositionally biased region" description="Basic and acidic residues" evidence="2">
    <location>
        <begin position="341"/>
        <end position="356"/>
    </location>
</feature>
<feature type="compositionally biased region" description="Basic and acidic residues" evidence="2">
    <location>
        <begin position="712"/>
        <end position="724"/>
    </location>
</feature>
<accession>C5JCV0</accession>
<accession>A0A179UAC4</accession>